<name>COAW_BACC0</name>
<organism>
    <name type="scientific">Bacillus cereus (strain AH820)</name>
    <dbReference type="NCBI Taxonomy" id="405535"/>
    <lineage>
        <taxon>Bacteria</taxon>
        <taxon>Bacillati</taxon>
        <taxon>Bacillota</taxon>
        <taxon>Bacilli</taxon>
        <taxon>Bacillales</taxon>
        <taxon>Bacillaceae</taxon>
        <taxon>Bacillus</taxon>
        <taxon>Bacillus cereus group</taxon>
    </lineage>
</organism>
<reference key="1">
    <citation type="submission" date="2008-10" db="EMBL/GenBank/DDBJ databases">
        <title>Genome sequence of Bacillus cereus AH820.</title>
        <authorList>
            <person name="Dodson R.J."/>
            <person name="Durkin A.S."/>
            <person name="Rosovitz M.J."/>
            <person name="Rasko D.A."/>
            <person name="Hoffmaster A."/>
            <person name="Ravel J."/>
            <person name="Sutton G."/>
        </authorList>
    </citation>
    <scope>NUCLEOTIDE SEQUENCE [LARGE SCALE GENOMIC DNA]</scope>
    <source>
        <strain>AH820</strain>
    </source>
</reference>
<accession>B7JSQ5</accession>
<feature type="chain" id="PRO_1000140206" description="Type II pantothenate kinase">
    <location>
        <begin position="1"/>
        <end position="276"/>
    </location>
</feature>
<feature type="active site" description="Proton acceptor" evidence="1">
    <location>
        <position position="76"/>
    </location>
</feature>
<feature type="binding site" evidence="1">
    <location>
        <begin position="8"/>
        <end position="15"/>
    </location>
    <ligand>
        <name>ATP</name>
        <dbReference type="ChEBI" id="CHEBI:30616"/>
    </ligand>
</feature>
<feature type="binding site" evidence="1">
    <location>
        <position position="105"/>
    </location>
    <ligand>
        <name>ATP</name>
        <dbReference type="ChEBI" id="CHEBI:30616"/>
    </ligand>
</feature>
<feature type="binding site" evidence="1">
    <location>
        <begin position="127"/>
        <end position="131"/>
    </location>
    <ligand>
        <name>ATP</name>
        <dbReference type="ChEBI" id="CHEBI:30616"/>
    </ligand>
</feature>
<feature type="binding site" evidence="1">
    <location>
        <position position="143"/>
    </location>
    <ligand>
        <name>ATP</name>
        <dbReference type="ChEBI" id="CHEBI:30616"/>
    </ligand>
</feature>
<feature type="binding site" evidence="1">
    <location>
        <position position="230"/>
    </location>
    <ligand>
        <name>ATP</name>
        <dbReference type="ChEBI" id="CHEBI:30616"/>
    </ligand>
</feature>
<comment type="function">
    <text evidence="1">Catalyzes the phosphorylation of pantothenate (Pan), the first step in CoA biosynthesis.</text>
</comment>
<comment type="catalytic activity">
    <reaction evidence="1">
        <text>(R)-pantothenate + ATP = (R)-4'-phosphopantothenate + ADP + H(+)</text>
        <dbReference type="Rhea" id="RHEA:16373"/>
        <dbReference type="ChEBI" id="CHEBI:10986"/>
        <dbReference type="ChEBI" id="CHEBI:15378"/>
        <dbReference type="ChEBI" id="CHEBI:29032"/>
        <dbReference type="ChEBI" id="CHEBI:30616"/>
        <dbReference type="ChEBI" id="CHEBI:456216"/>
        <dbReference type="EC" id="2.7.1.33"/>
    </reaction>
</comment>
<comment type="pathway">
    <text evidence="1">Cofactor biosynthesis; coenzyme A biosynthesis; CoA from (R)-pantothenate: step 1/5.</text>
</comment>
<comment type="subunit">
    <text evidence="1">Homodimer.</text>
</comment>
<comment type="subcellular location">
    <subcellularLocation>
        <location evidence="1">Cytoplasm</location>
    </subcellularLocation>
</comment>
<comment type="similarity">
    <text evidence="1">Belongs to the type II pantothenate kinase family.</text>
</comment>
<evidence type="ECO:0000255" key="1">
    <source>
        <dbReference type="HAMAP-Rule" id="MF_01273"/>
    </source>
</evidence>
<dbReference type="EC" id="2.7.1.33" evidence="1"/>
<dbReference type="EMBL" id="CP001283">
    <property type="protein sequence ID" value="ACK90876.1"/>
    <property type="molecule type" value="Genomic_DNA"/>
</dbReference>
<dbReference type="RefSeq" id="WP_000446248.1">
    <property type="nucleotide sequence ID" value="NC_011773.1"/>
</dbReference>
<dbReference type="SMR" id="B7JSQ5"/>
<dbReference type="KEGG" id="bcu:BCAH820_2903"/>
<dbReference type="HOGENOM" id="CLU_087521_1_0_9"/>
<dbReference type="UniPathway" id="UPA00241">
    <property type="reaction ID" value="UER00352"/>
</dbReference>
<dbReference type="Proteomes" id="UP000001363">
    <property type="component" value="Chromosome"/>
</dbReference>
<dbReference type="GO" id="GO:0005829">
    <property type="term" value="C:cytosol"/>
    <property type="evidence" value="ECO:0007669"/>
    <property type="project" value="TreeGrafter"/>
</dbReference>
<dbReference type="GO" id="GO:0005524">
    <property type="term" value="F:ATP binding"/>
    <property type="evidence" value="ECO:0007669"/>
    <property type="project" value="UniProtKB-UniRule"/>
</dbReference>
<dbReference type="GO" id="GO:0004594">
    <property type="term" value="F:pantothenate kinase activity"/>
    <property type="evidence" value="ECO:0007669"/>
    <property type="project" value="UniProtKB-UniRule"/>
</dbReference>
<dbReference type="GO" id="GO:0015937">
    <property type="term" value="P:coenzyme A biosynthetic process"/>
    <property type="evidence" value="ECO:0007669"/>
    <property type="project" value="UniProtKB-UniRule"/>
</dbReference>
<dbReference type="CDD" id="cd24085">
    <property type="entry name" value="ASKHA_NBD_PanK-II_bac"/>
    <property type="match status" value="1"/>
</dbReference>
<dbReference type="Gene3D" id="3.30.420.40">
    <property type="match status" value="3"/>
</dbReference>
<dbReference type="HAMAP" id="MF_01273">
    <property type="entry name" value="Pantothen_kinase_2"/>
    <property type="match status" value="1"/>
</dbReference>
<dbReference type="InterPro" id="IPR043129">
    <property type="entry name" value="ATPase_NBD"/>
</dbReference>
<dbReference type="InterPro" id="IPR004567">
    <property type="entry name" value="Type_II_PanK"/>
</dbReference>
<dbReference type="InterPro" id="IPR011602">
    <property type="entry name" value="Type_II_PanK_bac"/>
</dbReference>
<dbReference type="NCBIfam" id="TIGR00555">
    <property type="entry name" value="panK_eukar"/>
    <property type="match status" value="1"/>
</dbReference>
<dbReference type="NCBIfam" id="NF009842">
    <property type="entry name" value="PRK13317.1"/>
    <property type="match status" value="1"/>
</dbReference>
<dbReference type="PANTHER" id="PTHR12280:SF20">
    <property type="entry name" value="4'-PHOSPHOPANTETHEINE PHOSPHATASE"/>
    <property type="match status" value="1"/>
</dbReference>
<dbReference type="PANTHER" id="PTHR12280">
    <property type="entry name" value="PANTOTHENATE KINASE"/>
    <property type="match status" value="1"/>
</dbReference>
<dbReference type="Pfam" id="PF03630">
    <property type="entry name" value="Fumble"/>
    <property type="match status" value="1"/>
</dbReference>
<dbReference type="PIRSF" id="PIRSF036940">
    <property type="entry name" value="PanK_bac_aCoA"/>
    <property type="match status" value="1"/>
</dbReference>
<dbReference type="SUPFAM" id="SSF53067">
    <property type="entry name" value="Actin-like ATPase domain"/>
    <property type="match status" value="1"/>
</dbReference>
<proteinExistence type="inferred from homology"/>
<gene>
    <name evidence="1" type="primary">coaW</name>
    <name type="ordered locus">BCAH820_2903</name>
</gene>
<keyword id="KW-0067">ATP-binding</keyword>
<keyword id="KW-0173">Coenzyme A biosynthesis</keyword>
<keyword id="KW-0963">Cytoplasm</keyword>
<keyword id="KW-0418">Kinase</keyword>
<keyword id="KW-0547">Nucleotide-binding</keyword>
<keyword id="KW-0808">Transferase</keyword>
<protein>
    <recommendedName>
        <fullName evidence="1">Type II pantothenate kinase</fullName>
        <ecNumber evidence="1">2.7.1.33</ecNumber>
    </recommendedName>
    <alternativeName>
        <fullName evidence="1">PanK-II</fullName>
    </alternativeName>
    <alternativeName>
        <fullName evidence="1">Pantothenic acid kinase</fullName>
    </alternativeName>
</protein>
<sequence>MESTIGIDAGGTLTKIAYLNEKKKLTFEKFYSNEQDKIIDWLKKQTSIKQICITGGKAKQLQQLLSDSYKIVELNEFEATLVGVRYILKEEKYDINNFVLTNIGTGTSIHYIYNDRYIRAGGTGVGGGTIMGLSKLLTNIDHFEDVIPLTKVGSRKDLDITVGDIYGGILSPIDNSLTASNFGKAATIESNYNNSDILATVQGLVGEVVTALSLQFAETKNIGHIIYIGSTLCNNIHLQNIISSYTKYQNKTPIFLRDGGNSGAIGALLYATNKKS</sequence>